<sequence>LPICPSGAVNCQVSLRDLFDRAVILSHYIHNLSSEMFNEFDKRYAQGRGFMTKAINSCHTSSLSTPEDKEQAQQIHHEDLLNLVLRVLRSWNDPLYHLVTEVRGMQEAPDAILSRAIEIEEQNKRLLEGMEKIVGQVHPGVKENEIYSVWSGLPSLQMADEDTRLFAFYNLLHCLRRDSHKIDNYLKLLKCRIIYDSNC</sequence>
<evidence type="ECO:0000250" key="1">
    <source>
        <dbReference type="UniProtKB" id="P01236"/>
    </source>
</evidence>
<evidence type="ECO:0000250" key="2">
    <source>
        <dbReference type="UniProtKB" id="P01239"/>
    </source>
</evidence>
<evidence type="ECO:0000269" key="3">
    <source>
    </source>
</evidence>
<evidence type="ECO:0000305" key="4"/>
<keyword id="KW-0903">Direct protein sequencing</keyword>
<keyword id="KW-1015">Disulfide bond</keyword>
<keyword id="KW-0325">Glycoprotein</keyword>
<keyword id="KW-0372">Hormone</keyword>
<keyword id="KW-0421">Lactation</keyword>
<keyword id="KW-0597">Phosphoprotein</keyword>
<keyword id="KW-0964">Secreted</keyword>
<comment type="function">
    <text>Prolactin acts primarily on the mammary gland by promoting lactation.</text>
</comment>
<comment type="subunit">
    <text evidence="1">Interacts with PRLR.</text>
</comment>
<comment type="subcellular location">
    <subcellularLocation>
        <location>Secreted</location>
    </subcellularLocation>
</comment>
<comment type="similarity">
    <text evidence="4">Belongs to the somatotropin/prolactin family.</text>
</comment>
<accession>P22393</accession>
<name>PRL_CAMDR</name>
<gene>
    <name type="primary">PRL</name>
</gene>
<protein>
    <recommendedName>
        <fullName>Prolactin</fullName>
        <shortName>PRL</shortName>
    </recommendedName>
</protein>
<organism>
    <name type="scientific">Camelus dromedarius</name>
    <name type="common">Dromedary</name>
    <name type="synonym">Arabian camel</name>
    <dbReference type="NCBI Taxonomy" id="9838"/>
    <lineage>
        <taxon>Eukaryota</taxon>
        <taxon>Metazoa</taxon>
        <taxon>Chordata</taxon>
        <taxon>Craniata</taxon>
        <taxon>Vertebrata</taxon>
        <taxon>Euteleostomi</taxon>
        <taxon>Mammalia</taxon>
        <taxon>Eutheria</taxon>
        <taxon>Laurasiatheria</taxon>
        <taxon>Artiodactyla</taxon>
        <taxon>Tylopoda</taxon>
        <taxon>Camelidae</taxon>
        <taxon>Camelus</taxon>
    </lineage>
</organism>
<proteinExistence type="evidence at protein level"/>
<reference key="1">
    <citation type="journal article" date="1991" name="Biochim. Biophys. Acta">
        <title>Determination of the primary and secondary structures of the dromedary (Camelus dromedarius) prolactin and comparison with prolactins from other species.</title>
        <authorList>
            <person name="Martinat N."/>
            <person name="Huet J.-C."/>
            <person name="Nespoulous C."/>
            <person name="Combarnous Y."/>
            <person name="Pernollet J.-C."/>
        </authorList>
    </citation>
    <scope>PROTEIN SEQUENCE</scope>
    <scope>GLYCOSYLATION AT ASN-31</scope>
</reference>
<reference key="2">
    <citation type="journal article" date="1990" name="Comp. Biochem. Physiol.">
        <title>Purification and characterization of glycosylated and non-glycosylated forms of prolactin from the dromedary (Camelus dromedarius).</title>
        <authorList>
            <person name="Martinat N."/>
            <person name="Anouassi A."/>
            <person name="Huet J.-C."/>
            <person name="Pernollet J.-C."/>
            <person name="Combarnous Y."/>
        </authorList>
    </citation>
    <scope>PROTEIN SEQUENCE OF 1-40</scope>
    <source>
        <tissue>Pituitary</tissue>
    </source>
</reference>
<dbReference type="PIR" id="S15131">
    <property type="entry name" value="S15131"/>
</dbReference>
<dbReference type="SMR" id="P22393"/>
<dbReference type="STRING" id="9838.ENSCDRP00005026914"/>
<dbReference type="GlyCosmos" id="P22393">
    <property type="glycosylation" value="1 site, No reported glycans"/>
</dbReference>
<dbReference type="iPTMnet" id="P22393"/>
<dbReference type="GO" id="GO:0005615">
    <property type="term" value="C:extracellular space"/>
    <property type="evidence" value="ECO:0007669"/>
    <property type="project" value="TreeGrafter"/>
</dbReference>
<dbReference type="GO" id="GO:0005179">
    <property type="term" value="F:hormone activity"/>
    <property type="evidence" value="ECO:0007669"/>
    <property type="project" value="UniProtKB-KW"/>
</dbReference>
<dbReference type="GO" id="GO:0005148">
    <property type="term" value="F:prolactin receptor binding"/>
    <property type="evidence" value="ECO:0007669"/>
    <property type="project" value="TreeGrafter"/>
</dbReference>
<dbReference type="GO" id="GO:0007565">
    <property type="term" value="P:female pregnancy"/>
    <property type="evidence" value="ECO:0007669"/>
    <property type="project" value="TreeGrafter"/>
</dbReference>
<dbReference type="GO" id="GO:0007595">
    <property type="term" value="P:lactation"/>
    <property type="evidence" value="ECO:0007669"/>
    <property type="project" value="UniProtKB-KW"/>
</dbReference>
<dbReference type="GO" id="GO:0008284">
    <property type="term" value="P:positive regulation of cell population proliferation"/>
    <property type="evidence" value="ECO:0007669"/>
    <property type="project" value="TreeGrafter"/>
</dbReference>
<dbReference type="GO" id="GO:1903489">
    <property type="term" value="P:positive regulation of lactation"/>
    <property type="evidence" value="ECO:0007669"/>
    <property type="project" value="TreeGrafter"/>
</dbReference>
<dbReference type="GO" id="GO:0046427">
    <property type="term" value="P:positive regulation of receptor signaling pathway via JAK-STAT"/>
    <property type="evidence" value="ECO:0007669"/>
    <property type="project" value="TreeGrafter"/>
</dbReference>
<dbReference type="GO" id="GO:0031667">
    <property type="term" value="P:response to nutrient levels"/>
    <property type="evidence" value="ECO:0007669"/>
    <property type="project" value="TreeGrafter"/>
</dbReference>
<dbReference type="CDD" id="cd10288">
    <property type="entry name" value="prolactin_like"/>
    <property type="match status" value="1"/>
</dbReference>
<dbReference type="FunFam" id="1.20.1250.10:FF:000003">
    <property type="entry name" value="Prolactin"/>
    <property type="match status" value="1"/>
</dbReference>
<dbReference type="Gene3D" id="1.20.1250.10">
    <property type="match status" value="1"/>
</dbReference>
<dbReference type="InterPro" id="IPR009079">
    <property type="entry name" value="4_helix_cytokine-like_core"/>
</dbReference>
<dbReference type="InterPro" id="IPR001400">
    <property type="entry name" value="Somatotropin/Prolactin"/>
</dbReference>
<dbReference type="InterPro" id="IPR018116">
    <property type="entry name" value="Somatotropin_CS"/>
</dbReference>
<dbReference type="PANTHER" id="PTHR11417:SF5">
    <property type="entry name" value="PROLACTIN"/>
    <property type="match status" value="1"/>
</dbReference>
<dbReference type="PANTHER" id="PTHR11417">
    <property type="entry name" value="SOMATOTROPIN,PROLACTIN"/>
    <property type="match status" value="1"/>
</dbReference>
<dbReference type="Pfam" id="PF00103">
    <property type="entry name" value="Hormone_1"/>
    <property type="match status" value="1"/>
</dbReference>
<dbReference type="PRINTS" id="PR00836">
    <property type="entry name" value="SOMATOTROPIN"/>
</dbReference>
<dbReference type="SUPFAM" id="SSF47266">
    <property type="entry name" value="4-helical cytokines"/>
    <property type="match status" value="1"/>
</dbReference>
<dbReference type="PROSITE" id="PS00266">
    <property type="entry name" value="SOMATOTROPIN_1"/>
    <property type="match status" value="1"/>
</dbReference>
<dbReference type="PROSITE" id="PS00338">
    <property type="entry name" value="SOMATOTROPIN_2"/>
    <property type="match status" value="1"/>
</dbReference>
<feature type="chain" id="PRO_0000181318" description="Prolactin">
    <location>
        <begin position="1"/>
        <end position="199"/>
    </location>
</feature>
<feature type="modified residue" description="Phosphoserine" evidence="2">
    <location>
        <position position="26"/>
    </location>
</feature>
<feature type="modified residue" description="Phosphoserine" evidence="2">
    <location>
        <position position="34"/>
    </location>
</feature>
<feature type="modified residue" description="Phosphoserine" evidence="2">
    <location>
        <position position="90"/>
    </location>
</feature>
<feature type="glycosylation site" description="N-linked (GlcNAc...) asparagine; partial" evidence="3">
    <location>
        <position position="31"/>
    </location>
</feature>
<feature type="disulfide bond">
    <location>
        <begin position="4"/>
        <end position="11"/>
    </location>
</feature>
<feature type="disulfide bond">
    <location>
        <begin position="58"/>
        <end position="174"/>
    </location>
</feature>
<feature type="disulfide bond">
    <location>
        <begin position="191"/>
        <end position="199"/>
    </location>
</feature>